<feature type="chain" id="PRO_0000437024" description="Transcription factor TGAL10">
    <location>
        <begin position="1"/>
        <end position="389"/>
    </location>
</feature>
<feature type="domain" description="bZIP" evidence="2">
    <location>
        <begin position="107"/>
        <end position="151"/>
    </location>
</feature>
<feature type="domain" description="DOG1" evidence="3">
    <location>
        <begin position="176"/>
        <end position="389"/>
    </location>
</feature>
<feature type="region of interest" description="Disordered" evidence="4">
    <location>
        <begin position="80"/>
        <end position="110"/>
    </location>
</feature>
<feature type="region of interest" description="Basic motif" evidence="2">
    <location>
        <begin position="109"/>
        <end position="129"/>
    </location>
</feature>
<feature type="region of interest" description="Leucine-zipper" evidence="2">
    <location>
        <begin position="135"/>
        <end position="149"/>
    </location>
</feature>
<feature type="region of interest" description="Disordered" evidence="4">
    <location>
        <begin position="320"/>
        <end position="345"/>
    </location>
</feature>
<feature type="region of interest" description="Disordered" evidence="4">
    <location>
        <begin position="370"/>
        <end position="389"/>
    </location>
</feature>
<feature type="compositionally biased region" description="Basic and acidic residues" evidence="4">
    <location>
        <begin position="91"/>
        <end position="110"/>
    </location>
</feature>
<feature type="compositionally biased region" description="Basic residues" evidence="4">
    <location>
        <begin position="380"/>
        <end position="389"/>
    </location>
</feature>
<evidence type="ECO:0000250" key="1">
    <source>
        <dbReference type="UniProtKB" id="Q7X993"/>
    </source>
</evidence>
<evidence type="ECO:0000255" key="2">
    <source>
        <dbReference type="PROSITE-ProRule" id="PRU00978"/>
    </source>
</evidence>
<evidence type="ECO:0000255" key="3">
    <source>
        <dbReference type="PROSITE-ProRule" id="PRU01147"/>
    </source>
</evidence>
<evidence type="ECO:0000256" key="4">
    <source>
        <dbReference type="SAM" id="MobiDB-lite"/>
    </source>
</evidence>
<evidence type="ECO:0000303" key="5">
    <source>
    </source>
</evidence>
<evidence type="ECO:0000305" key="6"/>
<evidence type="ECO:0000312" key="7">
    <source>
        <dbReference type="EMBL" id="BAD03039.1"/>
    </source>
</evidence>
<evidence type="ECO:0000312" key="8">
    <source>
        <dbReference type="EMBL" id="BAD03235.1"/>
    </source>
</evidence>
<evidence type="ECO:0000312" key="9">
    <source>
        <dbReference type="EMBL" id="BAT04074.1"/>
    </source>
</evidence>
<proteinExistence type="evidence at transcript level"/>
<name>TGL10_ORYSJ</name>
<sequence>MTSAAPAAAQFAAPAPAAMGIYDRRHHPLAAGVWGDHPFIRPDTTASTSNAAAAAMVVAPPPLTEPKFESQLALPLQHGDDQDNAAALQESPRHASDSFEQEASKPRDKIQRRLAQNREAARKSRLRKKAYIQNLETSRMKLAHLEQEITRARQQSAYINRSSNPATLPAPIDSGVVTFEVEYAQWVEEQGRQTAELRASLQAAAEGPELRAVVEAALAHYDRLFAAKREAARRDVFFVMSGVWRTGAERFFLWIAGFRPSEVIRVLAPQLEPMTERQAADVQGLQQKARHLEDALSQGMDKLKQTLADSLLAEAVVVSTSCDASPPPPPPEEEEPSSSAAGDGGCYMAQMGSAMGRLSNLVAFVDHVRHRRSPPPTSHLHVRRRAELG</sequence>
<reference key="1">
    <citation type="journal article" date="2005" name="Nature">
        <title>The map-based sequence of the rice genome.</title>
        <authorList>
            <consortium name="International rice genome sequencing project (IRGSP)"/>
        </authorList>
    </citation>
    <scope>NUCLEOTIDE SEQUENCE [LARGE SCALE GENOMIC DNA]</scope>
    <source>
        <strain>cv. Nipponbare</strain>
    </source>
</reference>
<reference key="2">
    <citation type="journal article" date="2013" name="Rice">
        <title>Improvement of the Oryza sativa Nipponbare reference genome using next generation sequence and optical map data.</title>
        <authorList>
            <person name="Kawahara Y."/>
            <person name="de la Bastide M."/>
            <person name="Hamilton J.P."/>
            <person name="Kanamori H."/>
            <person name="McCombie W.R."/>
            <person name="Ouyang S."/>
            <person name="Schwartz D.C."/>
            <person name="Tanaka T."/>
            <person name="Wu J."/>
            <person name="Zhou S."/>
            <person name="Childs K.L."/>
            <person name="Davidson R.M."/>
            <person name="Lin H."/>
            <person name="Quesada-Ocampo L."/>
            <person name="Vaillancourt B."/>
            <person name="Sakai H."/>
            <person name="Lee S.S."/>
            <person name="Kim J."/>
            <person name="Numa H."/>
            <person name="Itoh T."/>
            <person name="Buell C.R."/>
            <person name="Matsumoto T."/>
        </authorList>
    </citation>
    <scope>GENOME REANNOTATION</scope>
    <source>
        <strain>cv. Nipponbare</strain>
    </source>
</reference>
<reference key="3">
    <citation type="journal article" date="2003" name="Science">
        <title>Collection, mapping, and annotation of over 28,000 cDNA clones from japonica rice.</title>
        <authorList>
            <consortium name="The rice full-length cDNA consortium"/>
        </authorList>
    </citation>
    <scope>NUCLEOTIDE SEQUENCE [LARGE SCALE MRNA]</scope>
    <source>
        <strain>cv. Nipponbare</strain>
    </source>
</reference>
<reference key="4">
    <citation type="journal article" date="2008" name="Plant Physiol.">
        <title>Genomic survey and gene expression analysis of the basic leucine zipper transcription factor family in rice.</title>
        <authorList>
            <person name="Nijhawan A."/>
            <person name="Jain M."/>
            <person name="Tyagi A.K."/>
            <person name="Khurana J.P."/>
        </authorList>
    </citation>
    <scope>GENE FAMILY</scope>
    <scope>NOMENCLATURE</scope>
</reference>
<keyword id="KW-0238">DNA-binding</keyword>
<keyword id="KW-0539">Nucleus</keyword>
<keyword id="KW-0611">Plant defense</keyword>
<keyword id="KW-1185">Reference proteome</keyword>
<keyword id="KW-0804">Transcription</keyword>
<keyword id="KW-0805">Transcription regulation</keyword>
<gene>
    <name evidence="6" type="primary">TGAL10</name>
    <name evidence="9" type="ordered locus">Os08g0176900</name>
    <name evidence="6" type="ordered locus">LOC_Os08g07970</name>
    <name evidence="7" type="ORF">OJ1120_C08.7</name>
    <name evidence="8" type="ORF">P0583B06.15</name>
</gene>
<organism>
    <name type="scientific">Oryza sativa subsp. japonica</name>
    <name type="common">Rice</name>
    <dbReference type="NCBI Taxonomy" id="39947"/>
    <lineage>
        <taxon>Eukaryota</taxon>
        <taxon>Viridiplantae</taxon>
        <taxon>Streptophyta</taxon>
        <taxon>Embryophyta</taxon>
        <taxon>Tracheophyta</taxon>
        <taxon>Spermatophyta</taxon>
        <taxon>Magnoliopsida</taxon>
        <taxon>Liliopsida</taxon>
        <taxon>Poales</taxon>
        <taxon>Poaceae</taxon>
        <taxon>BOP clade</taxon>
        <taxon>Oryzoideae</taxon>
        <taxon>Oryzeae</taxon>
        <taxon>Oryzinae</taxon>
        <taxon>Oryza</taxon>
        <taxon>Oryza sativa</taxon>
    </lineage>
</organism>
<comment type="function">
    <text evidence="1">Transcriptional regulator involved in defense response.</text>
</comment>
<comment type="subcellular location">
    <subcellularLocation>
        <location evidence="2">Nucleus</location>
    </subcellularLocation>
</comment>
<comment type="similarity">
    <text evidence="6">Belongs to the bZIP family.</text>
</comment>
<accession>Q6ZBS8</accession>
<protein>
    <recommendedName>
        <fullName evidence="6">Transcription factor TGAL10</fullName>
    </recommendedName>
    <alternativeName>
        <fullName evidence="5">bZIP transcription factor 64</fullName>
        <shortName evidence="5">OsbZIP64</shortName>
    </alternativeName>
</protein>
<dbReference type="EMBL" id="AP003878">
    <property type="protein sequence ID" value="BAD03039.1"/>
    <property type="molecule type" value="Genomic_DNA"/>
</dbReference>
<dbReference type="EMBL" id="AP004619">
    <property type="protein sequence ID" value="BAD03235.1"/>
    <property type="molecule type" value="Genomic_DNA"/>
</dbReference>
<dbReference type="EMBL" id="AP014964">
    <property type="protein sequence ID" value="BAT04074.1"/>
    <property type="molecule type" value="Genomic_DNA"/>
</dbReference>
<dbReference type="EMBL" id="AK107028">
    <property type="protein sequence ID" value="BAG97920.1"/>
    <property type="molecule type" value="mRNA"/>
</dbReference>
<dbReference type="SMR" id="Q6ZBS8"/>
<dbReference type="STRING" id="39947.Q6ZBS8"/>
<dbReference type="PaxDb" id="39947-Q6ZBS8"/>
<dbReference type="EnsemblPlants" id="Os08t0176900-01">
    <property type="protein sequence ID" value="Os08t0176900-01"/>
    <property type="gene ID" value="Os08g0176900"/>
</dbReference>
<dbReference type="Gramene" id="Os08t0176900-01">
    <property type="protein sequence ID" value="Os08t0176900-01"/>
    <property type="gene ID" value="Os08g0176900"/>
</dbReference>
<dbReference type="eggNOG" id="ENOG502QS1H">
    <property type="taxonomic scope" value="Eukaryota"/>
</dbReference>
<dbReference type="HOGENOM" id="CLU_024782_1_0_1"/>
<dbReference type="InParanoid" id="Q6ZBS8"/>
<dbReference type="Proteomes" id="UP000000763">
    <property type="component" value="Chromosome 8"/>
</dbReference>
<dbReference type="Proteomes" id="UP000059680">
    <property type="component" value="Chromosome 8"/>
</dbReference>
<dbReference type="GO" id="GO:0005634">
    <property type="term" value="C:nucleus"/>
    <property type="evidence" value="ECO:0007669"/>
    <property type="project" value="UniProtKB-SubCell"/>
</dbReference>
<dbReference type="GO" id="GO:0003700">
    <property type="term" value="F:DNA-binding transcription factor activity"/>
    <property type="evidence" value="ECO:0007669"/>
    <property type="project" value="InterPro"/>
</dbReference>
<dbReference type="GO" id="GO:0043565">
    <property type="term" value="F:sequence-specific DNA binding"/>
    <property type="evidence" value="ECO:0007669"/>
    <property type="project" value="InterPro"/>
</dbReference>
<dbReference type="GO" id="GO:0006952">
    <property type="term" value="P:defense response"/>
    <property type="evidence" value="ECO:0007669"/>
    <property type="project" value="UniProtKB-KW"/>
</dbReference>
<dbReference type="GO" id="GO:0006351">
    <property type="term" value="P:DNA-templated transcription"/>
    <property type="evidence" value="ECO:0007669"/>
    <property type="project" value="InterPro"/>
</dbReference>
<dbReference type="FunFam" id="1.20.5.170:FF:000019">
    <property type="entry name" value="BZIP family transcription factor"/>
    <property type="match status" value="1"/>
</dbReference>
<dbReference type="Gene3D" id="1.20.5.170">
    <property type="match status" value="1"/>
</dbReference>
<dbReference type="InterPro" id="IPR004827">
    <property type="entry name" value="bZIP"/>
</dbReference>
<dbReference type="InterPro" id="IPR046347">
    <property type="entry name" value="bZIP_sf"/>
</dbReference>
<dbReference type="InterPro" id="IPR025422">
    <property type="entry name" value="TGA_domain"/>
</dbReference>
<dbReference type="PANTHER" id="PTHR45693">
    <property type="entry name" value="TRANSCRIPTION FACTOR TGA9"/>
    <property type="match status" value="1"/>
</dbReference>
<dbReference type="PANTHER" id="PTHR45693:SF31">
    <property type="entry name" value="TRANSCRIPTION FACTOR TGAL10"/>
    <property type="match status" value="1"/>
</dbReference>
<dbReference type="Pfam" id="PF00170">
    <property type="entry name" value="bZIP_1"/>
    <property type="match status" value="1"/>
</dbReference>
<dbReference type="Pfam" id="PF14144">
    <property type="entry name" value="DOG1"/>
    <property type="match status" value="1"/>
</dbReference>
<dbReference type="SMART" id="SM00338">
    <property type="entry name" value="BRLZ"/>
    <property type="match status" value="1"/>
</dbReference>
<dbReference type="SUPFAM" id="SSF57959">
    <property type="entry name" value="Leucine zipper domain"/>
    <property type="match status" value="1"/>
</dbReference>
<dbReference type="PROSITE" id="PS50217">
    <property type="entry name" value="BZIP"/>
    <property type="match status" value="1"/>
</dbReference>
<dbReference type="PROSITE" id="PS00036">
    <property type="entry name" value="BZIP_BASIC"/>
    <property type="match status" value="1"/>
</dbReference>
<dbReference type="PROSITE" id="PS51806">
    <property type="entry name" value="DOG1"/>
    <property type="match status" value="1"/>
</dbReference>